<accession>C1AES0</accession>
<evidence type="ECO:0000255" key="1">
    <source>
        <dbReference type="HAMAP-Rule" id="MF_00316"/>
    </source>
</evidence>
<keyword id="KW-0963">Cytoplasm</keyword>
<keyword id="KW-0342">GTP-binding</keyword>
<keyword id="KW-0460">Magnesium</keyword>
<keyword id="KW-0479">Metal-binding</keyword>
<keyword id="KW-0501">Molybdenum cofactor biosynthesis</keyword>
<keyword id="KW-0547">Nucleotide-binding</keyword>
<keyword id="KW-0808">Transferase</keyword>
<proteinExistence type="inferred from homology"/>
<comment type="function">
    <text evidence="1">Transfers a GMP moiety from GTP to Mo-molybdopterin (Mo-MPT) cofactor (Moco or molybdenum cofactor) to form Mo-molybdopterin guanine dinucleotide (Mo-MGD) cofactor.</text>
</comment>
<comment type="catalytic activity">
    <reaction evidence="1">
        <text>Mo-molybdopterin + GTP + H(+) = Mo-molybdopterin guanine dinucleotide + diphosphate</text>
        <dbReference type="Rhea" id="RHEA:34243"/>
        <dbReference type="ChEBI" id="CHEBI:15378"/>
        <dbReference type="ChEBI" id="CHEBI:33019"/>
        <dbReference type="ChEBI" id="CHEBI:37565"/>
        <dbReference type="ChEBI" id="CHEBI:71302"/>
        <dbReference type="ChEBI" id="CHEBI:71310"/>
        <dbReference type="EC" id="2.7.7.77"/>
    </reaction>
</comment>
<comment type="cofactor">
    <cofactor evidence="1">
        <name>Mg(2+)</name>
        <dbReference type="ChEBI" id="CHEBI:18420"/>
    </cofactor>
</comment>
<comment type="subcellular location">
    <subcellularLocation>
        <location evidence="1">Cytoplasm</location>
    </subcellularLocation>
</comment>
<comment type="domain">
    <text evidence="1">The N-terminal domain determines nucleotide recognition and specific binding, while the C-terminal domain determines the specific binding to the target protein.</text>
</comment>
<comment type="similarity">
    <text evidence="1">Belongs to the MobA family.</text>
</comment>
<reference key="1">
    <citation type="journal article" date="2009" name="Vaccine">
        <title>Whole genome sequence analysis of Mycobacterium bovis bacillus Calmette-Guerin (BCG) Tokyo 172: a comparative study of BCG vaccine substrains.</title>
        <authorList>
            <person name="Seki M."/>
            <person name="Honda I."/>
            <person name="Fujita I."/>
            <person name="Yano I."/>
            <person name="Yamamoto S."/>
            <person name="Koyama A."/>
        </authorList>
    </citation>
    <scope>NUCLEOTIDE SEQUENCE [LARGE SCALE GENOMIC DNA]</scope>
    <source>
        <strain>BCG / Tokyo 172 / ATCC 35737 / TMC 1019</strain>
    </source>
</reference>
<organism>
    <name type="scientific">Mycobacterium bovis (strain BCG / Tokyo 172 / ATCC 35737 / TMC 1019)</name>
    <dbReference type="NCBI Taxonomy" id="561275"/>
    <lineage>
        <taxon>Bacteria</taxon>
        <taxon>Bacillati</taxon>
        <taxon>Actinomycetota</taxon>
        <taxon>Actinomycetes</taxon>
        <taxon>Mycobacteriales</taxon>
        <taxon>Mycobacteriaceae</taxon>
        <taxon>Mycobacterium</taxon>
        <taxon>Mycobacterium tuberculosis complex</taxon>
    </lineage>
</organism>
<sequence length="201" mass="21084">MAELAPDTVPLAGVVLAGGESRRMGRDKATLPLPGGTTTLVEHMVGILGQRCAPVFVMAAPGQPLPTLPVPVLRDELPGLGPLPATGRGLRAAAEAGVRLAFVCAVDMPYLTVELIEDLARRAVQTDAEVVLPWDGRNHYLAAVYRTDLADRVDTLVGAGERKMSALVDASDALRIVMADSRPLTNVNSAAGLHAPMQPGR</sequence>
<feature type="chain" id="PRO_1000132960" description="Probable molybdenum cofactor guanylyltransferase">
    <location>
        <begin position="1"/>
        <end position="201"/>
    </location>
</feature>
<feature type="binding site" evidence="1">
    <location>
        <begin position="16"/>
        <end position="18"/>
    </location>
    <ligand>
        <name>GTP</name>
        <dbReference type="ChEBI" id="CHEBI:37565"/>
    </ligand>
</feature>
<feature type="binding site" evidence="1">
    <location>
        <position position="28"/>
    </location>
    <ligand>
        <name>GTP</name>
        <dbReference type="ChEBI" id="CHEBI:37565"/>
    </ligand>
</feature>
<feature type="binding site" evidence="1">
    <location>
        <position position="75"/>
    </location>
    <ligand>
        <name>GTP</name>
        <dbReference type="ChEBI" id="CHEBI:37565"/>
    </ligand>
</feature>
<feature type="binding site" evidence="1">
    <location>
        <position position="107"/>
    </location>
    <ligand>
        <name>GTP</name>
        <dbReference type="ChEBI" id="CHEBI:37565"/>
    </ligand>
</feature>
<feature type="binding site" evidence="1">
    <location>
        <position position="107"/>
    </location>
    <ligand>
        <name>Mg(2+)</name>
        <dbReference type="ChEBI" id="CHEBI:18420"/>
    </ligand>
</feature>
<dbReference type="EC" id="2.7.7.77" evidence="1"/>
<dbReference type="EMBL" id="AP010918">
    <property type="protein sequence ID" value="BAH26749.1"/>
    <property type="molecule type" value="Genomic_DNA"/>
</dbReference>
<dbReference type="RefSeq" id="WP_003412618.1">
    <property type="nucleotide sequence ID" value="NZ_CP014566.1"/>
</dbReference>
<dbReference type="SMR" id="C1AES0"/>
<dbReference type="GeneID" id="45426443"/>
<dbReference type="KEGG" id="mbt:JTY_2467"/>
<dbReference type="HOGENOM" id="CLU_055597_3_2_11"/>
<dbReference type="GO" id="GO:0005737">
    <property type="term" value="C:cytoplasm"/>
    <property type="evidence" value="ECO:0007669"/>
    <property type="project" value="UniProtKB-SubCell"/>
</dbReference>
<dbReference type="GO" id="GO:0005525">
    <property type="term" value="F:GTP binding"/>
    <property type="evidence" value="ECO:0007669"/>
    <property type="project" value="UniProtKB-UniRule"/>
</dbReference>
<dbReference type="GO" id="GO:0046872">
    <property type="term" value="F:metal ion binding"/>
    <property type="evidence" value="ECO:0007669"/>
    <property type="project" value="UniProtKB-KW"/>
</dbReference>
<dbReference type="GO" id="GO:0061603">
    <property type="term" value="F:molybdenum cofactor guanylyltransferase activity"/>
    <property type="evidence" value="ECO:0007669"/>
    <property type="project" value="UniProtKB-EC"/>
</dbReference>
<dbReference type="GO" id="GO:0006777">
    <property type="term" value="P:Mo-molybdopterin cofactor biosynthetic process"/>
    <property type="evidence" value="ECO:0007669"/>
    <property type="project" value="UniProtKB-KW"/>
</dbReference>
<dbReference type="CDD" id="cd02503">
    <property type="entry name" value="MobA"/>
    <property type="match status" value="1"/>
</dbReference>
<dbReference type="Gene3D" id="3.90.550.10">
    <property type="entry name" value="Spore Coat Polysaccharide Biosynthesis Protein SpsA, Chain A"/>
    <property type="match status" value="1"/>
</dbReference>
<dbReference type="HAMAP" id="MF_00316">
    <property type="entry name" value="MobA"/>
    <property type="match status" value="1"/>
</dbReference>
<dbReference type="InterPro" id="IPR025877">
    <property type="entry name" value="MobA-like_NTP_Trfase"/>
</dbReference>
<dbReference type="InterPro" id="IPR013482">
    <property type="entry name" value="Molybde_CF_guanTrfase"/>
</dbReference>
<dbReference type="InterPro" id="IPR029044">
    <property type="entry name" value="Nucleotide-diphossugar_trans"/>
</dbReference>
<dbReference type="NCBIfam" id="NF001855">
    <property type="entry name" value="PRK00576.1"/>
    <property type="match status" value="1"/>
</dbReference>
<dbReference type="PANTHER" id="PTHR19136">
    <property type="entry name" value="MOLYBDENUM COFACTOR GUANYLYLTRANSFERASE"/>
    <property type="match status" value="1"/>
</dbReference>
<dbReference type="PANTHER" id="PTHR19136:SF81">
    <property type="entry name" value="MOLYBDENUM COFACTOR GUANYLYLTRANSFERASE"/>
    <property type="match status" value="1"/>
</dbReference>
<dbReference type="Pfam" id="PF12804">
    <property type="entry name" value="NTP_transf_3"/>
    <property type="match status" value="1"/>
</dbReference>
<dbReference type="SUPFAM" id="SSF53448">
    <property type="entry name" value="Nucleotide-diphospho-sugar transferases"/>
    <property type="match status" value="1"/>
</dbReference>
<name>MOBA_MYCBT</name>
<protein>
    <recommendedName>
        <fullName evidence="1">Probable molybdenum cofactor guanylyltransferase</fullName>
        <shortName evidence="1">MoCo guanylyltransferase</shortName>
        <ecNumber evidence="1">2.7.7.77</ecNumber>
    </recommendedName>
    <alternativeName>
        <fullName evidence="1">GTP:molybdopterin guanylyltransferase</fullName>
    </alternativeName>
    <alternativeName>
        <fullName evidence="1">Mo-MPT guanylyltransferase</fullName>
    </alternativeName>
    <alternativeName>
        <fullName evidence="1">Molybdopterin guanylyltransferase</fullName>
    </alternativeName>
    <alternativeName>
        <fullName evidence="1">Molybdopterin-guanine dinucleotide synthase</fullName>
        <shortName evidence="1">MGD synthase</shortName>
    </alternativeName>
</protein>
<gene>
    <name evidence="1" type="primary">mobA</name>
    <name type="ordered locus">JTY_2467</name>
</gene>